<sequence length="66" mass="7445">MAAVAGRDDDTFVFMGARHAAPVSADWFRFSGRSPVGTRRSRLTWRLTWLTCPAPPRLCRLPVERA</sequence>
<gene>
    <name type="primary">UL90</name>
</gene>
<feature type="chain" id="PRO_0000115341" description="Uncharacterized protein UL90">
    <location>
        <begin position="1"/>
        <end position="66"/>
    </location>
</feature>
<name>UL90_HCMVA</name>
<proteinExistence type="predicted"/>
<dbReference type="EMBL" id="X17403">
    <property type="protein sequence ID" value="CAA35364.1"/>
    <property type="molecule type" value="Genomic_DNA"/>
</dbReference>
<dbReference type="PIR" id="S09855">
    <property type="entry name" value="S09855"/>
</dbReference>
<dbReference type="Proteomes" id="UP000008991">
    <property type="component" value="Segment"/>
</dbReference>
<protein>
    <recommendedName>
        <fullName>Uncharacterized protein UL90</fullName>
    </recommendedName>
</protein>
<organism>
    <name type="scientific">Human cytomegalovirus (strain AD169)</name>
    <name type="common">HHV-5</name>
    <name type="synonym">Human herpesvirus 5</name>
    <dbReference type="NCBI Taxonomy" id="10360"/>
    <lineage>
        <taxon>Viruses</taxon>
        <taxon>Duplodnaviria</taxon>
        <taxon>Heunggongvirae</taxon>
        <taxon>Peploviricota</taxon>
        <taxon>Herviviricetes</taxon>
        <taxon>Herpesvirales</taxon>
        <taxon>Orthoherpesviridae</taxon>
        <taxon>Betaherpesvirinae</taxon>
        <taxon>Cytomegalovirus</taxon>
        <taxon>Cytomegalovirus humanbeta5</taxon>
        <taxon>Human cytomegalovirus</taxon>
    </lineage>
</organism>
<reference key="1">
    <citation type="journal article" date="1990" name="Curr. Top. Microbiol. Immunol.">
        <title>Analysis of the protein-coding content of the sequence of human cytomegalovirus strain AD169.</title>
        <authorList>
            <person name="Chee M.S."/>
            <person name="Bankier A.T."/>
            <person name="Beck S."/>
            <person name="Bohni R."/>
            <person name="Brown C.M."/>
            <person name="Cerny R."/>
            <person name="Horsnell T."/>
            <person name="Hutchison C.A. III"/>
            <person name="Kouzarides T."/>
            <person name="Martignetti J.A."/>
            <person name="Preddie E."/>
            <person name="Satchwell S.C."/>
            <person name="Tomlinson P."/>
            <person name="Weston K.M."/>
            <person name="Barrell B.G."/>
        </authorList>
    </citation>
    <scope>NUCLEOTIDE SEQUENCE [LARGE SCALE GENOMIC DNA]</scope>
</reference>
<organismHost>
    <name type="scientific">Homo sapiens</name>
    <name type="common">Human</name>
    <dbReference type="NCBI Taxonomy" id="9606"/>
</organismHost>
<accession>P16796</accession>